<keyword id="KW-0165">Cleavage on pair of basic residues</keyword>
<keyword id="KW-1015">Disulfide bond</keyword>
<keyword id="KW-0325">Glycoprotein</keyword>
<keyword id="KW-0339">Growth factor</keyword>
<keyword id="KW-0964">Secreted</keyword>
<evidence type="ECO:0000250" key="1"/>
<evidence type="ECO:0000255" key="2"/>
<evidence type="ECO:0000256" key="3">
    <source>
        <dbReference type="SAM" id="MobiDB-lite"/>
    </source>
</evidence>
<evidence type="ECO:0000305" key="4"/>
<name>BDNF_MORSI</name>
<comment type="function">
    <text evidence="1">Promotes the survival of neuronal populations that are all located either in the central nervous system or directly connected to it.</text>
</comment>
<comment type="subcellular location">
    <subcellularLocation>
        <location evidence="1">Secreted</location>
    </subcellularLocation>
</comment>
<comment type="similarity">
    <text evidence="4">Belongs to the NGF-beta family.</text>
</comment>
<feature type="propeptide" id="PRO_0000346693" evidence="1">
    <location>
        <begin position="1" status="less than"/>
        <end position="100"/>
    </location>
</feature>
<feature type="chain" id="PRO_0000346694" description="Neurotrophic factor BDNF">
    <location>
        <begin position="101"/>
        <end position="199" status="greater than"/>
    </location>
</feature>
<feature type="region of interest" description="Disordered" evidence="3">
    <location>
        <begin position="1"/>
        <end position="23"/>
    </location>
</feature>
<feature type="compositionally biased region" description="Polar residues" evidence="3">
    <location>
        <begin position="12"/>
        <end position="23"/>
    </location>
</feature>
<feature type="glycosylation site" description="N-linked (GlcNAc...) asparagine" evidence="2">
    <location>
        <position position="93"/>
    </location>
</feature>
<feature type="disulfide bond" evidence="1">
    <location>
        <begin position="113"/>
        <end position="180"/>
    </location>
</feature>
<feature type="non-terminal residue">
    <location>
        <position position="1"/>
    </location>
</feature>
<feature type="non-terminal residue">
    <location>
        <position position="199"/>
    </location>
</feature>
<protein>
    <recommendedName>
        <fullName evidence="4">Neurotrophic factor BDNF precursor form</fullName>
        <shortName>proBDNF</shortName>
    </recommendedName>
    <alternativeName>
        <fullName>Brain-derived neurotrophic factor</fullName>
    </alternativeName>
    <component>
        <recommendedName>
            <fullName>Neurotrophic factor BDNF</fullName>
        </recommendedName>
    </component>
</protein>
<gene>
    <name type="primary">BDNF</name>
</gene>
<accession>Q1X703</accession>
<organism>
    <name type="scientific">Morelia spilota</name>
    <name type="common">Carpet python</name>
    <dbReference type="NCBI Taxonomy" id="51896"/>
    <lineage>
        <taxon>Eukaryota</taxon>
        <taxon>Metazoa</taxon>
        <taxon>Chordata</taxon>
        <taxon>Craniata</taxon>
        <taxon>Vertebrata</taxon>
        <taxon>Euteleostomi</taxon>
        <taxon>Lepidosauria</taxon>
        <taxon>Squamata</taxon>
        <taxon>Bifurcata</taxon>
        <taxon>Unidentata</taxon>
        <taxon>Episquamata</taxon>
        <taxon>Toxicofera</taxon>
        <taxon>Serpentes</taxon>
        <taxon>Henophidia</taxon>
        <taxon>Pythonidae</taxon>
        <taxon>Morelia</taxon>
    </lineage>
</organism>
<proteinExistence type="inferred from homology"/>
<sequence length="199" mass="22264">GQGSLAYPGLRTQGNLETLSGPNDATRGLTSLADTFEHVIEELLDEQQVIQPSKENKDADLYSSRVMLSSQVPLEPPLLFLLEEYKNYLDAANMSMRVRRHSDPARRGELSVCDSTSEWVTAAEKKTAVDMSGATVTVLEKVPVPKGQLKQYFYETKCSSKGYAKEGCRGIDKRYWNSQCRTTQSYVRALTMDNKKRVG</sequence>
<reference key="1">
    <citation type="journal article" date="2006" name="Mol. Phylogenet. Evol.">
        <title>Dispersal and vicariance: the complex evolutionary history of boid snakes.</title>
        <authorList>
            <person name="Noonan B.P."/>
            <person name="Chippindale P.T."/>
        </authorList>
    </citation>
    <scope>NUCLEOTIDE SEQUENCE [GENOMIC DNA]</scope>
</reference>
<dbReference type="EMBL" id="AY988035">
    <property type="protein sequence ID" value="AAY44242.1"/>
    <property type="molecule type" value="Genomic_DNA"/>
</dbReference>
<dbReference type="SMR" id="Q1X703"/>
<dbReference type="GlyCosmos" id="Q1X703">
    <property type="glycosylation" value="1 site, No reported glycans"/>
</dbReference>
<dbReference type="GO" id="GO:0030424">
    <property type="term" value="C:axon"/>
    <property type="evidence" value="ECO:0007669"/>
    <property type="project" value="TreeGrafter"/>
</dbReference>
<dbReference type="GO" id="GO:0030425">
    <property type="term" value="C:dendrite"/>
    <property type="evidence" value="ECO:0007669"/>
    <property type="project" value="TreeGrafter"/>
</dbReference>
<dbReference type="GO" id="GO:0005615">
    <property type="term" value="C:extracellular space"/>
    <property type="evidence" value="ECO:0007669"/>
    <property type="project" value="TreeGrafter"/>
</dbReference>
<dbReference type="GO" id="GO:0008021">
    <property type="term" value="C:synaptic vesicle"/>
    <property type="evidence" value="ECO:0007669"/>
    <property type="project" value="TreeGrafter"/>
</dbReference>
<dbReference type="GO" id="GO:0008083">
    <property type="term" value="F:growth factor activity"/>
    <property type="evidence" value="ECO:0007669"/>
    <property type="project" value="UniProtKB-KW"/>
</dbReference>
<dbReference type="GO" id="GO:0005163">
    <property type="term" value="F:nerve growth factor receptor binding"/>
    <property type="evidence" value="ECO:0007669"/>
    <property type="project" value="TreeGrafter"/>
</dbReference>
<dbReference type="GO" id="GO:0007169">
    <property type="term" value="P:cell surface receptor protein tyrosine kinase signaling pathway"/>
    <property type="evidence" value="ECO:0007669"/>
    <property type="project" value="TreeGrafter"/>
</dbReference>
<dbReference type="GO" id="GO:0050804">
    <property type="term" value="P:modulation of chemical synaptic transmission"/>
    <property type="evidence" value="ECO:0007669"/>
    <property type="project" value="TreeGrafter"/>
</dbReference>
<dbReference type="GO" id="GO:0043524">
    <property type="term" value="P:negative regulation of neuron apoptotic process"/>
    <property type="evidence" value="ECO:0007669"/>
    <property type="project" value="TreeGrafter"/>
</dbReference>
<dbReference type="GO" id="GO:0021675">
    <property type="term" value="P:nerve development"/>
    <property type="evidence" value="ECO:0007669"/>
    <property type="project" value="TreeGrafter"/>
</dbReference>
<dbReference type="GO" id="GO:0038180">
    <property type="term" value="P:nerve growth factor signaling pathway"/>
    <property type="evidence" value="ECO:0007669"/>
    <property type="project" value="TreeGrafter"/>
</dbReference>
<dbReference type="GO" id="GO:0048812">
    <property type="term" value="P:neuron projection morphogenesis"/>
    <property type="evidence" value="ECO:0007669"/>
    <property type="project" value="TreeGrafter"/>
</dbReference>
<dbReference type="Gene3D" id="2.10.90.10">
    <property type="entry name" value="Cystine-knot cytokines"/>
    <property type="match status" value="1"/>
</dbReference>
<dbReference type="InterPro" id="IPR020430">
    <property type="entry name" value="Brain-der_neurotrophic_factor"/>
</dbReference>
<dbReference type="InterPro" id="IPR029034">
    <property type="entry name" value="Cystine-knot_cytokine"/>
</dbReference>
<dbReference type="InterPro" id="IPR020408">
    <property type="entry name" value="Nerve_growth_factor-like"/>
</dbReference>
<dbReference type="InterPro" id="IPR002072">
    <property type="entry name" value="Nerve_growth_factor-rel"/>
</dbReference>
<dbReference type="InterPro" id="IPR019846">
    <property type="entry name" value="Nerve_growth_factor_CS"/>
</dbReference>
<dbReference type="PANTHER" id="PTHR11589:SF3">
    <property type="entry name" value="BRAIN-DERIVED NEUROTROPHIC FACTOR"/>
    <property type="match status" value="1"/>
</dbReference>
<dbReference type="PANTHER" id="PTHR11589">
    <property type="entry name" value="NERVE GROWTH FACTOR NGF -RELATED"/>
    <property type="match status" value="1"/>
</dbReference>
<dbReference type="Pfam" id="PF00243">
    <property type="entry name" value="NGF"/>
    <property type="match status" value="1"/>
</dbReference>
<dbReference type="PIRSF" id="PIRSF001789">
    <property type="entry name" value="NGF"/>
    <property type="match status" value="1"/>
</dbReference>
<dbReference type="PRINTS" id="PR01912">
    <property type="entry name" value="BDNFACTOR"/>
</dbReference>
<dbReference type="PRINTS" id="PR00268">
    <property type="entry name" value="NGF"/>
</dbReference>
<dbReference type="SMART" id="SM00140">
    <property type="entry name" value="NGF"/>
    <property type="match status" value="1"/>
</dbReference>
<dbReference type="SUPFAM" id="SSF57501">
    <property type="entry name" value="Cystine-knot cytokines"/>
    <property type="match status" value="1"/>
</dbReference>
<dbReference type="PROSITE" id="PS00248">
    <property type="entry name" value="NGF_1"/>
    <property type="match status" value="1"/>
</dbReference>
<dbReference type="PROSITE" id="PS50270">
    <property type="entry name" value="NGF_2"/>
    <property type="match status" value="1"/>
</dbReference>